<sequence length="283" mass="32090">MIRKAVIPVAGFGTRLLPITKAQPKEMLPVVNKPIVQYVVEDLVEAGVKDILFVTGKGKQAIENHFDVNYELECKLEKSGKYELLKIIKEIDRLGNIFYVRQKEQKGLGDAILYGEEFVGEEYFIAMVGDTIYSKNIVKDLIKAHEKYGCSVIALERVPKEDVYKYGVIDGEEIEKGVYKIKNMVEKPKVEEAPSNLIITGAYLLSPKIFEKIRETPPGRGGEIQITDAMNLLLKEEDIIGVEINCKRYDIGDALGWLKANVEIGAERFPEFREFLKEFVKNL</sequence>
<reference key="1">
    <citation type="journal article" date="1996" name="Science">
        <title>Complete genome sequence of the methanogenic archaeon, Methanococcus jannaschii.</title>
        <authorList>
            <person name="Bult C.J."/>
            <person name="White O."/>
            <person name="Olsen G.J."/>
            <person name="Zhou L."/>
            <person name="Fleischmann R.D."/>
            <person name="Sutton G.G."/>
            <person name="Blake J.A."/>
            <person name="FitzGerald L.M."/>
            <person name="Clayton R.A."/>
            <person name="Gocayne J.D."/>
            <person name="Kerlavage A.R."/>
            <person name="Dougherty B.A."/>
            <person name="Tomb J.-F."/>
            <person name="Adams M.D."/>
            <person name="Reich C.I."/>
            <person name="Overbeek R."/>
            <person name="Kirkness E.F."/>
            <person name="Weinstock K.G."/>
            <person name="Merrick J.M."/>
            <person name="Glodek A."/>
            <person name="Scott J.L."/>
            <person name="Geoghagen N.S.M."/>
            <person name="Weidman J.F."/>
            <person name="Fuhrmann J.L."/>
            <person name="Nguyen D."/>
            <person name="Utterback T.R."/>
            <person name="Kelley J.M."/>
            <person name="Peterson J.D."/>
            <person name="Sadow P.W."/>
            <person name="Hanna M.C."/>
            <person name="Cotton M.D."/>
            <person name="Roberts K.M."/>
            <person name="Hurst M.A."/>
            <person name="Kaine B.P."/>
            <person name="Borodovsky M."/>
            <person name="Klenk H.-P."/>
            <person name="Fraser C.M."/>
            <person name="Smith H.O."/>
            <person name="Woese C.R."/>
            <person name="Venter J.C."/>
        </authorList>
    </citation>
    <scope>NUCLEOTIDE SEQUENCE [LARGE SCALE GENOMIC DNA]</scope>
    <source>
        <strain>ATCC 43067 / DSM 2661 / JAL-1 / JCM 10045 / NBRC 100440</strain>
    </source>
</reference>
<name>Y1334_METJA</name>
<organism>
    <name type="scientific">Methanocaldococcus jannaschii (strain ATCC 43067 / DSM 2661 / JAL-1 / JCM 10045 / NBRC 100440)</name>
    <name type="common">Methanococcus jannaschii</name>
    <dbReference type="NCBI Taxonomy" id="243232"/>
    <lineage>
        <taxon>Archaea</taxon>
        <taxon>Methanobacteriati</taxon>
        <taxon>Methanobacteriota</taxon>
        <taxon>Methanomada group</taxon>
        <taxon>Methanococci</taxon>
        <taxon>Methanococcales</taxon>
        <taxon>Methanocaldococcaceae</taxon>
        <taxon>Methanocaldococcus</taxon>
    </lineage>
</organism>
<keyword id="KW-0548">Nucleotidyltransferase</keyword>
<keyword id="KW-1185">Reference proteome</keyword>
<keyword id="KW-0808">Transferase</keyword>
<evidence type="ECO:0000305" key="1"/>
<comment type="catalytic activity">
    <reaction>
        <text>alpha-D-glucose 1-phosphate + UTP + H(+) = UDP-alpha-D-glucose + diphosphate</text>
        <dbReference type="Rhea" id="RHEA:19889"/>
        <dbReference type="ChEBI" id="CHEBI:15378"/>
        <dbReference type="ChEBI" id="CHEBI:33019"/>
        <dbReference type="ChEBI" id="CHEBI:46398"/>
        <dbReference type="ChEBI" id="CHEBI:58601"/>
        <dbReference type="ChEBI" id="CHEBI:58885"/>
        <dbReference type="EC" id="2.7.7.9"/>
    </reaction>
</comment>
<comment type="similarity">
    <text evidence="1">Belongs to the UDPGP type 2 family.</text>
</comment>
<gene>
    <name type="ordered locus">MJ1334</name>
</gene>
<feature type="chain" id="PRO_0000201377" description="Putative UTP--glucose-1-phosphate uridylyltransferase">
    <location>
        <begin position="1"/>
        <end position="283"/>
    </location>
</feature>
<dbReference type="EC" id="2.7.7.9"/>
<dbReference type="EMBL" id="L77117">
    <property type="protein sequence ID" value="AAB99341.1"/>
    <property type="molecule type" value="Genomic_DNA"/>
</dbReference>
<dbReference type="PIR" id="E64466">
    <property type="entry name" value="E64466"/>
</dbReference>
<dbReference type="RefSeq" id="WP_010870852.1">
    <property type="nucleotide sequence ID" value="NC_000909.1"/>
</dbReference>
<dbReference type="SMR" id="Q58730"/>
<dbReference type="FunCoup" id="Q58730">
    <property type="interactions" value="124"/>
</dbReference>
<dbReference type="STRING" id="243232.MJ_1334"/>
<dbReference type="PaxDb" id="243232-MJ_1334"/>
<dbReference type="EnsemblBacteria" id="AAB99341">
    <property type="protein sequence ID" value="AAB99341"/>
    <property type="gene ID" value="MJ_1334"/>
</dbReference>
<dbReference type="GeneID" id="1452237"/>
<dbReference type="KEGG" id="mja:MJ_1334"/>
<dbReference type="eggNOG" id="arCOG00665">
    <property type="taxonomic scope" value="Archaea"/>
</dbReference>
<dbReference type="HOGENOM" id="CLU_029499_1_2_2"/>
<dbReference type="InParanoid" id="Q58730"/>
<dbReference type="OrthoDB" id="15372at2157"/>
<dbReference type="PhylomeDB" id="Q58730"/>
<dbReference type="Proteomes" id="UP000000805">
    <property type="component" value="Chromosome"/>
</dbReference>
<dbReference type="GO" id="GO:0003983">
    <property type="term" value="F:UTP:glucose-1-phosphate uridylyltransferase activity"/>
    <property type="evidence" value="ECO:0007669"/>
    <property type="project" value="UniProtKB-EC"/>
</dbReference>
<dbReference type="GO" id="GO:0009058">
    <property type="term" value="P:biosynthetic process"/>
    <property type="evidence" value="ECO:0007669"/>
    <property type="project" value="InterPro"/>
</dbReference>
<dbReference type="GO" id="GO:0006011">
    <property type="term" value="P:UDP-alpha-D-glucose metabolic process"/>
    <property type="evidence" value="ECO:0007669"/>
    <property type="project" value="InterPro"/>
</dbReference>
<dbReference type="CDD" id="cd02541">
    <property type="entry name" value="UGPase_prokaryotic"/>
    <property type="match status" value="1"/>
</dbReference>
<dbReference type="Gene3D" id="3.90.550.10">
    <property type="entry name" value="Spore Coat Polysaccharide Biosynthesis Protein SpsA, Chain A"/>
    <property type="match status" value="1"/>
</dbReference>
<dbReference type="InterPro" id="IPR005771">
    <property type="entry name" value="GalU_uridylyltTrfase_bac/arc"/>
</dbReference>
<dbReference type="InterPro" id="IPR005835">
    <property type="entry name" value="NTP_transferase_dom"/>
</dbReference>
<dbReference type="InterPro" id="IPR029044">
    <property type="entry name" value="Nucleotide-diphossugar_trans"/>
</dbReference>
<dbReference type="NCBIfam" id="TIGR01099">
    <property type="entry name" value="galU"/>
    <property type="match status" value="1"/>
</dbReference>
<dbReference type="PANTHER" id="PTHR43197">
    <property type="entry name" value="UTP--GLUCOSE-1-PHOSPHATE URIDYLYLTRANSFERASE"/>
    <property type="match status" value="1"/>
</dbReference>
<dbReference type="PANTHER" id="PTHR43197:SF1">
    <property type="entry name" value="UTP--GLUCOSE-1-PHOSPHATE URIDYLYLTRANSFERASE"/>
    <property type="match status" value="1"/>
</dbReference>
<dbReference type="Pfam" id="PF00483">
    <property type="entry name" value="NTP_transferase"/>
    <property type="match status" value="1"/>
</dbReference>
<dbReference type="SUPFAM" id="SSF53448">
    <property type="entry name" value="Nucleotide-diphospho-sugar transferases"/>
    <property type="match status" value="1"/>
</dbReference>
<proteinExistence type="inferred from homology"/>
<protein>
    <recommendedName>
        <fullName>Putative UTP--glucose-1-phosphate uridylyltransferase</fullName>
        <ecNumber>2.7.7.9</ecNumber>
    </recommendedName>
    <alternativeName>
        <fullName>Alpha-D-glucosyl-1-phosphate uridylyltransferase</fullName>
    </alternativeName>
    <alternativeName>
        <fullName>UDP-glucose pyrophosphorylase</fullName>
        <shortName>UDPGP</shortName>
    </alternativeName>
    <alternativeName>
        <fullName>Uridine diphosphoglucose pyrophosphorylase</fullName>
    </alternativeName>
</protein>
<accession>Q58730</accession>